<protein>
    <recommendedName>
        <fullName evidence="2">Alkyl hydroperoxide reductase AhpD</fullName>
        <ecNumber evidence="2">1.11.1.28</ecNumber>
    </recommendedName>
    <alternativeName>
        <fullName evidence="2">Alkylhydroperoxidase AhpD</fullName>
    </alternativeName>
</protein>
<comment type="function">
    <text evidence="2">Antioxidant protein with alkyl hydroperoxidase activity. Required for the reduction of the AhpC active site cysteine residues and for the regeneration of the AhpC enzyme activity.</text>
</comment>
<comment type="catalytic activity">
    <reaction evidence="2">
        <text>N(6)-[(R)-dihydrolipoyl]-L-lysyl-[lipoyl-carrier protein] + a hydroperoxide = N(6)-[(R)-lipoyl]-L-lysyl-[lipoyl-carrier protein] + an alcohol + H2O</text>
        <dbReference type="Rhea" id="RHEA:62636"/>
        <dbReference type="Rhea" id="RHEA-COMP:10502"/>
        <dbReference type="Rhea" id="RHEA-COMP:16355"/>
        <dbReference type="ChEBI" id="CHEBI:15377"/>
        <dbReference type="ChEBI" id="CHEBI:30879"/>
        <dbReference type="ChEBI" id="CHEBI:35924"/>
        <dbReference type="ChEBI" id="CHEBI:83099"/>
        <dbReference type="ChEBI" id="CHEBI:83100"/>
        <dbReference type="EC" id="1.11.1.28"/>
    </reaction>
</comment>
<comment type="similarity">
    <text evidence="2">Belongs to the AhpD family.</text>
</comment>
<comment type="sequence caution" evidence="3">
    <conflict type="erroneous initiation">
        <sequence resource="EMBL-CDS" id="ABQ69932"/>
    </conflict>
    <text>Extended N-terminus.</text>
</comment>
<keyword id="KW-0049">Antioxidant</keyword>
<keyword id="KW-1015">Disulfide bond</keyword>
<keyword id="KW-0560">Oxidoreductase</keyword>
<keyword id="KW-0575">Peroxidase</keyword>
<keyword id="KW-0676">Redox-active center</keyword>
<keyword id="KW-1185">Reference proteome</keyword>
<feature type="chain" id="PRO_0000359507" description="Alkyl hydroperoxide reductase AhpD">
    <location>
        <begin position="1"/>
        <end position="173"/>
    </location>
</feature>
<feature type="active site" description="Proton donor" evidence="2">
    <location>
        <position position="131"/>
    </location>
</feature>
<feature type="active site" description="Cysteine sulfenic acid (-SOH) intermediate" evidence="2">
    <location>
        <position position="134"/>
    </location>
</feature>
<feature type="disulfide bond" evidence="1">
    <location>
        <begin position="131"/>
        <end position="134"/>
    </location>
</feature>
<feature type="disulfide bond" description="Interchain (with AhpC); in linked form" evidence="2">
    <location>
        <position position="134"/>
    </location>
</feature>
<reference key="1">
    <citation type="journal article" date="2010" name="J. Bacteriol.">
        <title>Genome sequence of the dioxin-mineralizing bacterium Sphingomonas wittichii RW1.</title>
        <authorList>
            <person name="Miller T.R."/>
            <person name="Delcher A.L."/>
            <person name="Salzberg S.L."/>
            <person name="Saunders E."/>
            <person name="Detter J.C."/>
            <person name="Halden R.U."/>
        </authorList>
    </citation>
    <scope>NUCLEOTIDE SEQUENCE [LARGE SCALE GENOMIC DNA]</scope>
    <source>
        <strain>DSM 6014 / CCUG 31198 / JCM 15750 / NBRC 105917 / EY 4224 / RW1</strain>
    </source>
</reference>
<evidence type="ECO:0000250" key="1"/>
<evidence type="ECO:0000255" key="2">
    <source>
        <dbReference type="HAMAP-Rule" id="MF_01676"/>
    </source>
</evidence>
<evidence type="ECO:0000305" key="3"/>
<sequence length="173" mass="18305">MSLKEFADALPDYAKDIRLNVGSLLGDQTLTEQRKYGLLLACAHGSGYKPIVEATEAEVAGKLSPEAANAARAAAAVMAMNNVYYRFVHLASNKEYGQMPAKLRMNVIGSPGIEKDDFELFSLAVSAMNGCGLCIDSHEKVLRQHGVAADVIQTAARVGAVIKAAATVHATAV</sequence>
<proteinExistence type="inferred from homology"/>
<gene>
    <name evidence="2" type="primary">ahpD</name>
    <name type="ordered locus">Swit_3586</name>
</gene>
<accession>A5VCB6</accession>
<dbReference type="EC" id="1.11.1.28" evidence="2"/>
<dbReference type="EMBL" id="CP000699">
    <property type="protein sequence ID" value="ABQ69932.1"/>
    <property type="status" value="ALT_INIT"/>
    <property type="molecule type" value="Genomic_DNA"/>
</dbReference>
<dbReference type="SMR" id="A5VCB6"/>
<dbReference type="STRING" id="392499.Swit_3586"/>
<dbReference type="PeroxiBase" id="4639">
    <property type="entry name" value="SwAhpD"/>
</dbReference>
<dbReference type="PaxDb" id="392499-Swit_3586"/>
<dbReference type="KEGG" id="swi:Swit_3586"/>
<dbReference type="eggNOG" id="COG2128">
    <property type="taxonomic scope" value="Bacteria"/>
</dbReference>
<dbReference type="HOGENOM" id="CLU_105328_0_0_5"/>
<dbReference type="OrthoDB" id="9801997at2"/>
<dbReference type="Proteomes" id="UP000001989">
    <property type="component" value="Chromosome"/>
</dbReference>
<dbReference type="GO" id="GO:0008785">
    <property type="term" value="F:alkyl hydroperoxide reductase activity"/>
    <property type="evidence" value="ECO:0007669"/>
    <property type="project" value="UniProtKB-UniRule"/>
</dbReference>
<dbReference type="GO" id="GO:0015036">
    <property type="term" value="F:disulfide oxidoreductase activity"/>
    <property type="evidence" value="ECO:0007669"/>
    <property type="project" value="TreeGrafter"/>
</dbReference>
<dbReference type="GO" id="GO:0032843">
    <property type="term" value="F:hydroperoxide reductase activity"/>
    <property type="evidence" value="ECO:0007669"/>
    <property type="project" value="InterPro"/>
</dbReference>
<dbReference type="GO" id="GO:0051920">
    <property type="term" value="F:peroxiredoxin activity"/>
    <property type="evidence" value="ECO:0007669"/>
    <property type="project" value="InterPro"/>
</dbReference>
<dbReference type="GO" id="GO:0045454">
    <property type="term" value="P:cell redox homeostasis"/>
    <property type="evidence" value="ECO:0007669"/>
    <property type="project" value="TreeGrafter"/>
</dbReference>
<dbReference type="GO" id="GO:0006979">
    <property type="term" value="P:response to oxidative stress"/>
    <property type="evidence" value="ECO:0007669"/>
    <property type="project" value="InterPro"/>
</dbReference>
<dbReference type="Gene3D" id="1.20.1290.10">
    <property type="entry name" value="AhpD-like"/>
    <property type="match status" value="1"/>
</dbReference>
<dbReference type="HAMAP" id="MF_01676">
    <property type="entry name" value="AhpD"/>
    <property type="match status" value="1"/>
</dbReference>
<dbReference type="InterPro" id="IPR004674">
    <property type="entry name" value="AhpD"/>
</dbReference>
<dbReference type="InterPro" id="IPR029032">
    <property type="entry name" value="AhpD-like"/>
</dbReference>
<dbReference type="InterPro" id="IPR004675">
    <property type="entry name" value="AhpD_core"/>
</dbReference>
<dbReference type="InterPro" id="IPR003779">
    <property type="entry name" value="CMD-like"/>
</dbReference>
<dbReference type="NCBIfam" id="TIGR00777">
    <property type="entry name" value="ahpD"/>
    <property type="match status" value="1"/>
</dbReference>
<dbReference type="NCBIfam" id="TIGR00778">
    <property type="entry name" value="ahpD_dom"/>
    <property type="match status" value="1"/>
</dbReference>
<dbReference type="PANTHER" id="PTHR33930">
    <property type="entry name" value="ALKYL HYDROPEROXIDE REDUCTASE AHPD"/>
    <property type="match status" value="1"/>
</dbReference>
<dbReference type="PANTHER" id="PTHR33930:SF7">
    <property type="entry name" value="ALKYL HYDROPEROXIDE REDUCTASE AHPD"/>
    <property type="match status" value="1"/>
</dbReference>
<dbReference type="Pfam" id="PF02627">
    <property type="entry name" value="CMD"/>
    <property type="match status" value="1"/>
</dbReference>
<dbReference type="SUPFAM" id="SSF69118">
    <property type="entry name" value="AhpD-like"/>
    <property type="match status" value="1"/>
</dbReference>
<organism>
    <name type="scientific">Rhizorhabdus wittichii (strain DSM 6014 / CCUG 31198 / JCM 15750 / NBRC 105917 / EY 4224 / RW1)</name>
    <name type="common">Sphingomonas wittichii</name>
    <dbReference type="NCBI Taxonomy" id="392499"/>
    <lineage>
        <taxon>Bacteria</taxon>
        <taxon>Pseudomonadati</taxon>
        <taxon>Pseudomonadota</taxon>
        <taxon>Alphaproteobacteria</taxon>
        <taxon>Sphingomonadales</taxon>
        <taxon>Sphingomonadaceae</taxon>
        <taxon>Rhizorhabdus</taxon>
    </lineage>
</organism>
<name>AHPD_RHIWR</name>